<gene>
    <name type="ORF">C48B4.6</name>
</gene>
<reference key="1">
    <citation type="journal article" date="1994" name="Nature">
        <title>2.2 Mb of contiguous nucleotide sequence from chromosome III of C. elegans.</title>
        <authorList>
            <person name="Wilson R."/>
            <person name="Ainscough R."/>
            <person name="Anderson K."/>
            <person name="Baynes C."/>
            <person name="Berks M."/>
            <person name="Bonfield J."/>
            <person name="Burton J."/>
            <person name="Connell M."/>
            <person name="Copsey T."/>
            <person name="Cooper J."/>
            <person name="Coulson A."/>
            <person name="Craxton M."/>
            <person name="Dear S."/>
            <person name="Du Z."/>
            <person name="Durbin R."/>
            <person name="Favello A."/>
            <person name="Fraser A."/>
            <person name="Fulton L."/>
            <person name="Gardner A."/>
            <person name="Green P."/>
            <person name="Hawkins T."/>
            <person name="Hillier L."/>
            <person name="Jier M."/>
            <person name="Johnston L."/>
            <person name="Jones M."/>
            <person name="Kershaw J."/>
            <person name="Kirsten J."/>
            <person name="Laisster N."/>
            <person name="Latreille P."/>
            <person name="Lightning J."/>
            <person name="Lloyd C."/>
            <person name="Mortimore B."/>
            <person name="O'Callaghan M."/>
            <person name="Parsons J."/>
            <person name="Percy C."/>
            <person name="Rifken L."/>
            <person name="Roopra A."/>
            <person name="Saunders D."/>
            <person name="Shownkeen R."/>
            <person name="Sims M."/>
            <person name="Smaldon N."/>
            <person name="Smith A."/>
            <person name="Smith M."/>
            <person name="Sonnhammer E."/>
            <person name="Staden R."/>
            <person name="Sulston J."/>
            <person name="Thierry-Mieg J."/>
            <person name="Thomas K."/>
            <person name="Vaudin M."/>
            <person name="Vaughan K."/>
            <person name="Waterston R."/>
            <person name="Watson A."/>
            <person name="Weinstock L."/>
            <person name="Wilkinson-Sproat J."/>
            <person name="Wohldman P."/>
        </authorList>
    </citation>
    <scope>NUCLEOTIDE SEQUENCE [LARGE SCALE GENOMIC DNA]</scope>
    <source>
        <strain>Bristol N2</strain>
    </source>
</reference>
<reference key="2">
    <citation type="journal article" date="1998" name="Science">
        <title>Genome sequence of the nematode C. elegans: a platform for investigating biology.</title>
        <authorList>
            <consortium name="The C. elegans sequencing consortium"/>
        </authorList>
    </citation>
    <scope>NUCLEOTIDE SEQUENCE [LARGE SCALE GENOMIC DNA]</scope>
    <source>
        <strain>Bristol N2</strain>
    </source>
</reference>
<dbReference type="EMBL" id="Z29117">
    <property type="protein sequence ID" value="CAA82378.1"/>
    <property type="molecule type" value="Genomic_DNA"/>
</dbReference>
<dbReference type="PIR" id="S40726">
    <property type="entry name" value="S40726"/>
</dbReference>
<dbReference type="RefSeq" id="NP_499109.1">
    <property type="nucleotide sequence ID" value="NM_066708.4"/>
</dbReference>
<dbReference type="FunCoup" id="P34360">
    <property type="interactions" value="1"/>
</dbReference>
<dbReference type="STRING" id="6239.C48B4.6.1"/>
<dbReference type="PaxDb" id="6239-C48B4.6"/>
<dbReference type="PeptideAtlas" id="P34360"/>
<dbReference type="EnsemblMetazoa" id="C48B4.6.1">
    <property type="protein sequence ID" value="C48B4.6.1"/>
    <property type="gene ID" value="WBGene00008169"/>
</dbReference>
<dbReference type="GeneID" id="183566"/>
<dbReference type="KEGG" id="cel:CELE_C48B4.6"/>
<dbReference type="UCSC" id="C48B4.6">
    <property type="organism name" value="c. elegans"/>
</dbReference>
<dbReference type="AGR" id="WB:WBGene00008169"/>
<dbReference type="CTD" id="183566"/>
<dbReference type="WormBase" id="C48B4.6">
    <property type="protein sequence ID" value="CE00482"/>
    <property type="gene ID" value="WBGene00008169"/>
</dbReference>
<dbReference type="HOGENOM" id="CLU_1526544_0_0_1"/>
<dbReference type="InParanoid" id="P34360"/>
<dbReference type="OrthoDB" id="10297847at2759"/>
<dbReference type="PRO" id="PR:P34360"/>
<dbReference type="Proteomes" id="UP000001940">
    <property type="component" value="Chromosome III"/>
</dbReference>
<dbReference type="Bgee" id="WBGene00008169">
    <property type="expression patterns" value="Expressed in germ line (C elegans) and 4 other cell types or tissues"/>
</dbReference>
<dbReference type="InterPro" id="IPR035321">
    <property type="entry name" value="DUF5373"/>
</dbReference>
<dbReference type="Pfam" id="PF17343">
    <property type="entry name" value="DUF5373"/>
    <property type="match status" value="1"/>
</dbReference>
<name>YLH6_CAEEL</name>
<protein>
    <recommendedName>
        <fullName>Uncharacterized protein C48B4.6</fullName>
    </recommendedName>
</protein>
<feature type="chain" id="PRO_0000065247" description="Uncharacterized protein C48B4.6">
    <location>
        <begin position="1"/>
        <end position="176"/>
    </location>
</feature>
<accession>P34360</accession>
<keyword id="KW-1185">Reference proteome</keyword>
<organism>
    <name type="scientific">Caenorhabditis elegans</name>
    <dbReference type="NCBI Taxonomy" id="6239"/>
    <lineage>
        <taxon>Eukaryota</taxon>
        <taxon>Metazoa</taxon>
        <taxon>Ecdysozoa</taxon>
        <taxon>Nematoda</taxon>
        <taxon>Chromadorea</taxon>
        <taxon>Rhabditida</taxon>
        <taxon>Rhabditina</taxon>
        <taxon>Rhabditomorpha</taxon>
        <taxon>Rhabditoidea</taxon>
        <taxon>Rhabditidae</taxon>
        <taxon>Peloderinae</taxon>
        <taxon>Caenorhabditis</taxon>
    </lineage>
</organism>
<sequence length="176" mass="20508">MSKTAALTDIEKSKATISFWKFIAMFIQALFLIGLVEDLCYYHMFYSRQYFFLEILVTIHTGFSFIVFLIEHKPLIMLHVGYMTLLTIIPIAYMVMQGVEFGILIFDDYHILVFRDFHKFGCSIMFSLYYIGYIVVCFLFIEALEKKPVLPQVYSIKPKLVAAVNPSNNCNVYPML</sequence>
<proteinExistence type="predicted"/>